<organism>
    <name type="scientific">Mus musculus</name>
    <name type="common">Mouse</name>
    <dbReference type="NCBI Taxonomy" id="10090"/>
    <lineage>
        <taxon>Eukaryota</taxon>
        <taxon>Metazoa</taxon>
        <taxon>Chordata</taxon>
        <taxon>Craniata</taxon>
        <taxon>Vertebrata</taxon>
        <taxon>Euteleostomi</taxon>
        <taxon>Mammalia</taxon>
        <taxon>Eutheria</taxon>
        <taxon>Euarchontoglires</taxon>
        <taxon>Glires</taxon>
        <taxon>Rodentia</taxon>
        <taxon>Myomorpha</taxon>
        <taxon>Muroidea</taxon>
        <taxon>Muridae</taxon>
        <taxon>Murinae</taxon>
        <taxon>Mus</taxon>
        <taxon>Mus</taxon>
    </lineage>
</organism>
<comment type="function">
    <text evidence="4 7">Atypical histone H2A which replaces conventional H2A during late spermatogenesis and is involved in the replacement of histones to protamine in male germ cells (PubMed:28366643). Core component of nucleosome: nucleosomes wrap and compact DNA into chromatin, limiting DNA accessibility to the cellular machineries which require DNA as a template (PubMed:19506029). Nucleosomes containing H2AB1 only wrap 130 bp of DNA, compared to 147 bp for classical nucleosomes (PubMed:19506029). In condensing spermatids, the heterodimer between H2AB1 and H2BC1/TH2B is loaded onto the nucleosomes and promotes loading of transition proteins (TNP1 and TNP2) onto the nucleosomes (PubMed:28366643). Inclusion of the H2AB1-H2BC1/TH2B dimer into chromatin opens the nucleosomes, releasing the nucleosomal DNA ends and allowing the invasion of nucleosomes by transition proteins (TNP1 and TNP2) (PubMed:28366643). Then, transition proteins drive the recruitment and processing of protamines, which are responsible for histone eviction (PubMed:28366643).</text>
</comment>
<comment type="subunit">
    <text evidence="2 4 7">The nucleosome is a histone octamer containing two molecules each of H2A, H2B, H3 and H4 assembled in one H3-H4 heterotetramer and two H2A-H2B heterodimers (PubMed:19506029). Incorporated into nucleosomes during late spermatogenesis (PubMed:19506029). Interacts with H2BC1/TH2B; preferentially dimerizes with H2BC1/TH2B to form nucleosomes (PubMed:17261847, PubMed:28366643).</text>
</comment>
<comment type="subcellular location">
    <subcellularLocation>
        <location evidence="2">Nucleus</location>
    </subcellularLocation>
    <subcellularLocation>
        <location evidence="2">Chromosome</location>
    </subcellularLocation>
    <text evidence="2">Specifically localizes to the pericentric regions in condensing spermatids (PubMed:17261847).</text>
</comment>
<comment type="tissue specificity">
    <text evidence="2 5 6">Highly expressed in adult testis, mainly in spermatocytes (PubMed:17261847, PubMed:20008104, PubMed:20188161).</text>
</comment>
<comment type="developmental stage">
    <text evidence="2 3 5 6 7">Expressed since postnatal day (P) 21, peaks at P30, and gradually decreases in the testis of aging mouse (PubMed:20008104, PubMed:20188161). Coexpressed with transition proteins during late spermiogenesis (PubMed:28366643). Strongly enriched in step 12-16 spermatids and accumulate during late spermiogenesis, in condensing spermatids (PubMed:17261847). Remains present in mature spermatozoa isolated from epididymis (PubMed:17261847). Rapidly disappears from the paternal pericentric heterochromatin regions after sperm-egg fusion (PubMed:18703863).</text>
</comment>
<comment type="disruption phenotype">
    <text evidence="7">Male mice are completely sterile due to defects in spermatogenesis. Chromatin in mature spermatozoa shows defects in density, due to impaired histone replacement by protamines. A significant proportion of Prm2 remains unprocessed.</text>
</comment>
<comment type="miscellaneous">
    <text evidence="11">In contrast to other H2A histones, it does not contain the conserved residues that are the target of post-translational modifications.</text>
</comment>
<comment type="similarity">
    <text evidence="11">Belongs to the histone H2A family.</text>
</comment>
<comment type="caution">
    <text evidence="7">Although related to histone H2AB1 in human (AC P0C5Y9), it is unclear whether human and mouse H2AB1 proteins are involved in similar processes. In mouse, histone H2AB1 is specifically required to direct the transformation of dissociating nucleosomes to protamine in male germ cells during spermatogenesis (PubMed:28366643). It is however unclear whether human protein, which participates in mRNA processing and is associated with active transcription, is also involved in nucleosomes to protamine replacement.</text>
</comment>
<evidence type="ECO:0000250" key="1">
    <source>
        <dbReference type="UniProtKB" id="P0C5Y9"/>
    </source>
</evidence>
<evidence type="ECO:0000269" key="2">
    <source>
    </source>
</evidence>
<evidence type="ECO:0000269" key="3">
    <source>
    </source>
</evidence>
<evidence type="ECO:0000269" key="4">
    <source>
    </source>
</evidence>
<evidence type="ECO:0000269" key="5">
    <source>
    </source>
</evidence>
<evidence type="ECO:0000269" key="6">
    <source>
    </source>
</evidence>
<evidence type="ECO:0000269" key="7">
    <source>
    </source>
</evidence>
<evidence type="ECO:0000303" key="8">
    <source>
    </source>
</evidence>
<evidence type="ECO:0000303" key="9">
    <source>
    </source>
</evidence>
<evidence type="ECO:0000303" key="10">
    <source>
    </source>
</evidence>
<evidence type="ECO:0000305" key="11"/>
<evidence type="ECO:0000312" key="12">
    <source>
        <dbReference type="MGI" id="MGI:1915481"/>
    </source>
</evidence>
<dbReference type="EMBL" id="EU079024">
    <property type="protein sequence ID" value="ABU52995.1"/>
    <property type="molecule type" value="mRNA"/>
</dbReference>
<dbReference type="EMBL" id="AK006586">
    <property type="protein sequence ID" value="BAB24661.1"/>
    <property type="molecule type" value="mRNA"/>
</dbReference>
<dbReference type="EMBL" id="AK015538">
    <property type="protein sequence ID" value="BAB29887.1"/>
    <property type="molecule type" value="mRNA"/>
</dbReference>
<dbReference type="EMBL" id="AK018839">
    <property type="protein sequence ID" value="BAB31458.1"/>
    <property type="molecule type" value="mRNA"/>
</dbReference>
<dbReference type="EMBL" id="AK018922">
    <property type="protein sequence ID" value="BAB31484.1"/>
    <property type="molecule type" value="mRNA"/>
</dbReference>
<dbReference type="EMBL" id="AK018951">
    <property type="protein sequence ID" value="BAB31492.1"/>
    <property type="molecule type" value="mRNA"/>
</dbReference>
<dbReference type="EMBL" id="AK018962">
    <property type="protein sequence ID" value="BAB31496.1"/>
    <property type="molecule type" value="mRNA"/>
</dbReference>
<dbReference type="EMBL" id="AK160415">
    <property type="protein sequence ID" value="BAE35779.1"/>
    <property type="molecule type" value="mRNA"/>
</dbReference>
<dbReference type="EMBL" id="AL928589">
    <property type="status" value="NOT_ANNOTATED_CDS"/>
    <property type="molecule type" value="Genomic_DNA"/>
</dbReference>
<dbReference type="EMBL" id="CH466542">
    <property type="protein sequence ID" value="EDL08091.1"/>
    <property type="molecule type" value="Genomic_DNA"/>
</dbReference>
<dbReference type="EMBL" id="BC061062">
    <property type="protein sequence ID" value="AAH61062.1"/>
    <property type="molecule type" value="mRNA"/>
</dbReference>
<dbReference type="CCDS" id="CCDS38050.1"/>
<dbReference type="RefSeq" id="NP_080903.1">
    <property type="nucleotide sequence ID" value="NM_026627.2"/>
</dbReference>
<dbReference type="SMR" id="Q9CQ70"/>
<dbReference type="FunCoup" id="Q9CQ70">
    <property type="interactions" value="36"/>
</dbReference>
<dbReference type="STRING" id="10090.ENSMUSP00000100618"/>
<dbReference type="PhosphoSitePlus" id="Q9CQ70"/>
<dbReference type="SwissPalm" id="Q9CQ70"/>
<dbReference type="PaxDb" id="10090-ENSMUSP00000100618"/>
<dbReference type="ProteomicsDB" id="270912"/>
<dbReference type="DNASU" id="68231"/>
<dbReference type="Ensembl" id="ENSMUST00000105001.4">
    <property type="protein sequence ID" value="ENSMUSP00000100618.3"/>
    <property type="gene ID" value="ENSMUSG00000062651.5"/>
</dbReference>
<dbReference type="GeneID" id="68231"/>
<dbReference type="KEGG" id="mmu:68231"/>
<dbReference type="UCSC" id="uc008ili.1">
    <property type="organism name" value="mouse"/>
</dbReference>
<dbReference type="AGR" id="MGI:1915481"/>
<dbReference type="CTD" id="68231"/>
<dbReference type="MGI" id="MGI:1915481">
    <property type="gene designation" value="H2al2a"/>
</dbReference>
<dbReference type="VEuPathDB" id="HostDB:ENSMUSG00000062651"/>
<dbReference type="eggNOG" id="KOG1756">
    <property type="taxonomic scope" value="Eukaryota"/>
</dbReference>
<dbReference type="GeneTree" id="ENSGT00940000162492"/>
<dbReference type="HOGENOM" id="CLU_062828_3_2_1"/>
<dbReference type="InParanoid" id="Q9CQ70"/>
<dbReference type="OMA" id="DEMTQNK"/>
<dbReference type="OrthoDB" id="9421954at2759"/>
<dbReference type="PhylomeDB" id="Q9CQ70"/>
<dbReference type="TreeFam" id="TF300137"/>
<dbReference type="BioGRID-ORCS" id="68231">
    <property type="hits" value="2 hits in 78 CRISPR screens"/>
</dbReference>
<dbReference type="ChiTaRS" id="H2al2a">
    <property type="organism name" value="mouse"/>
</dbReference>
<dbReference type="PRO" id="PR:Q9CQ70"/>
<dbReference type="Proteomes" id="UP000000589">
    <property type="component" value="Chromosome 2"/>
</dbReference>
<dbReference type="RNAct" id="Q9CQ70">
    <property type="molecule type" value="protein"/>
</dbReference>
<dbReference type="Bgee" id="ENSMUSG00000062651">
    <property type="expression patterns" value="Expressed in testis and 9 other cell types or tissues"/>
</dbReference>
<dbReference type="GO" id="GO:0000786">
    <property type="term" value="C:nucleosome"/>
    <property type="evidence" value="ECO:0000314"/>
    <property type="project" value="UniProtKB"/>
</dbReference>
<dbReference type="GO" id="GO:0005634">
    <property type="term" value="C:nucleus"/>
    <property type="evidence" value="ECO:0000314"/>
    <property type="project" value="MGI"/>
</dbReference>
<dbReference type="GO" id="GO:0005721">
    <property type="term" value="C:pericentric heterochromatin"/>
    <property type="evidence" value="ECO:0000314"/>
    <property type="project" value="MGI"/>
</dbReference>
<dbReference type="GO" id="GO:0003677">
    <property type="term" value="F:DNA binding"/>
    <property type="evidence" value="ECO:0007669"/>
    <property type="project" value="UniProtKB-KW"/>
</dbReference>
<dbReference type="GO" id="GO:0042393">
    <property type="term" value="F:histone binding"/>
    <property type="evidence" value="ECO:0000353"/>
    <property type="project" value="UniProtKB"/>
</dbReference>
<dbReference type="GO" id="GO:0046982">
    <property type="term" value="F:protein heterodimerization activity"/>
    <property type="evidence" value="ECO:0007669"/>
    <property type="project" value="InterPro"/>
</dbReference>
<dbReference type="GO" id="GO:0030527">
    <property type="term" value="F:structural constituent of chromatin"/>
    <property type="evidence" value="ECO:0007669"/>
    <property type="project" value="InterPro"/>
</dbReference>
<dbReference type="GO" id="GO:0051276">
    <property type="term" value="P:chromosome organization"/>
    <property type="evidence" value="ECO:0000314"/>
    <property type="project" value="MGI"/>
</dbReference>
<dbReference type="GO" id="GO:0006334">
    <property type="term" value="P:nucleosome assembly"/>
    <property type="evidence" value="ECO:0000314"/>
    <property type="project" value="MGI"/>
</dbReference>
<dbReference type="GO" id="GO:0035092">
    <property type="term" value="P:sperm DNA condensation"/>
    <property type="evidence" value="ECO:0000314"/>
    <property type="project" value="UniProtKB"/>
</dbReference>
<dbReference type="CDD" id="cd00074">
    <property type="entry name" value="HFD_H2A"/>
    <property type="match status" value="1"/>
</dbReference>
<dbReference type="FunFam" id="1.10.20.10:FF:000095">
    <property type="entry name" value="Histone H2A"/>
    <property type="match status" value="1"/>
</dbReference>
<dbReference type="Gene3D" id="1.10.20.10">
    <property type="entry name" value="Histone, subunit A"/>
    <property type="match status" value="1"/>
</dbReference>
<dbReference type="InterPro" id="IPR009072">
    <property type="entry name" value="Histone-fold"/>
</dbReference>
<dbReference type="InterPro" id="IPR002119">
    <property type="entry name" value="Histone_H2A"/>
</dbReference>
<dbReference type="InterPro" id="IPR007125">
    <property type="entry name" value="Histone_H2A/H2B/H3"/>
</dbReference>
<dbReference type="PANTHER" id="PTHR23430">
    <property type="entry name" value="HISTONE H2A"/>
    <property type="match status" value="1"/>
</dbReference>
<dbReference type="Pfam" id="PF00125">
    <property type="entry name" value="Histone"/>
    <property type="match status" value="1"/>
</dbReference>
<dbReference type="PRINTS" id="PR00620">
    <property type="entry name" value="HISTONEH2A"/>
</dbReference>
<dbReference type="SMART" id="SM00414">
    <property type="entry name" value="H2A"/>
    <property type="match status" value="1"/>
</dbReference>
<dbReference type="SUPFAM" id="SSF47113">
    <property type="entry name" value="Histone-fold"/>
    <property type="match status" value="1"/>
</dbReference>
<proteinExistence type="evidence at protein level"/>
<accession>Q9CQ70</accession>
<accession>Q9D9Q5</accession>
<reference key="1">
    <citation type="journal article" date="2010" name="Genomics">
        <title>TSEG-1, a novel member of histone H2A variants, participates in spermatogenesis via promoting apoptosis of spermatogenic cells.</title>
        <authorList>
            <person name="Gu C."/>
            <person name="Tong Q."/>
            <person name="Zheng L."/>
            <person name="Liang Z."/>
            <person name="Pu J."/>
            <person name="Mei H."/>
            <person name="Hu T."/>
            <person name="Du Z."/>
            <person name="Tian F."/>
            <person name="Zeng F."/>
        </authorList>
    </citation>
    <scope>NUCLEOTIDE SEQUENCE [MRNA]</scope>
    <scope>TISSUE SPECIFICITY</scope>
    <scope>DEVELOPMENTAL STAGE</scope>
    <scope>POSSIBLE FUNCTION</scope>
    <source>
        <strain>BALB/cJ</strain>
        <tissue>Testis</tissue>
    </source>
</reference>
<reference key="2">
    <citation type="journal article" date="2005" name="Science">
        <title>The transcriptional landscape of the mammalian genome.</title>
        <authorList>
            <person name="Carninci P."/>
            <person name="Kasukawa T."/>
            <person name="Katayama S."/>
            <person name="Gough J."/>
            <person name="Frith M.C."/>
            <person name="Maeda N."/>
            <person name="Oyama R."/>
            <person name="Ravasi T."/>
            <person name="Lenhard B."/>
            <person name="Wells C."/>
            <person name="Kodzius R."/>
            <person name="Shimokawa K."/>
            <person name="Bajic V.B."/>
            <person name="Brenner S.E."/>
            <person name="Batalov S."/>
            <person name="Forrest A.R."/>
            <person name="Zavolan M."/>
            <person name="Davis M.J."/>
            <person name="Wilming L.G."/>
            <person name="Aidinis V."/>
            <person name="Allen J.E."/>
            <person name="Ambesi-Impiombato A."/>
            <person name="Apweiler R."/>
            <person name="Aturaliya R.N."/>
            <person name="Bailey T.L."/>
            <person name="Bansal M."/>
            <person name="Baxter L."/>
            <person name="Beisel K.W."/>
            <person name="Bersano T."/>
            <person name="Bono H."/>
            <person name="Chalk A.M."/>
            <person name="Chiu K.P."/>
            <person name="Choudhary V."/>
            <person name="Christoffels A."/>
            <person name="Clutterbuck D.R."/>
            <person name="Crowe M.L."/>
            <person name="Dalla E."/>
            <person name="Dalrymple B.P."/>
            <person name="de Bono B."/>
            <person name="Della Gatta G."/>
            <person name="di Bernardo D."/>
            <person name="Down T."/>
            <person name="Engstrom P."/>
            <person name="Fagiolini M."/>
            <person name="Faulkner G."/>
            <person name="Fletcher C.F."/>
            <person name="Fukushima T."/>
            <person name="Furuno M."/>
            <person name="Futaki S."/>
            <person name="Gariboldi M."/>
            <person name="Georgii-Hemming P."/>
            <person name="Gingeras T.R."/>
            <person name="Gojobori T."/>
            <person name="Green R.E."/>
            <person name="Gustincich S."/>
            <person name="Harbers M."/>
            <person name="Hayashi Y."/>
            <person name="Hensch T.K."/>
            <person name="Hirokawa N."/>
            <person name="Hill D."/>
            <person name="Huminiecki L."/>
            <person name="Iacono M."/>
            <person name="Ikeo K."/>
            <person name="Iwama A."/>
            <person name="Ishikawa T."/>
            <person name="Jakt M."/>
            <person name="Kanapin A."/>
            <person name="Katoh M."/>
            <person name="Kawasawa Y."/>
            <person name="Kelso J."/>
            <person name="Kitamura H."/>
            <person name="Kitano H."/>
            <person name="Kollias G."/>
            <person name="Krishnan S.P."/>
            <person name="Kruger A."/>
            <person name="Kummerfeld S.K."/>
            <person name="Kurochkin I.V."/>
            <person name="Lareau L.F."/>
            <person name="Lazarevic D."/>
            <person name="Lipovich L."/>
            <person name="Liu J."/>
            <person name="Liuni S."/>
            <person name="McWilliam S."/>
            <person name="Madan Babu M."/>
            <person name="Madera M."/>
            <person name="Marchionni L."/>
            <person name="Matsuda H."/>
            <person name="Matsuzawa S."/>
            <person name="Miki H."/>
            <person name="Mignone F."/>
            <person name="Miyake S."/>
            <person name="Morris K."/>
            <person name="Mottagui-Tabar S."/>
            <person name="Mulder N."/>
            <person name="Nakano N."/>
            <person name="Nakauchi H."/>
            <person name="Ng P."/>
            <person name="Nilsson R."/>
            <person name="Nishiguchi S."/>
            <person name="Nishikawa S."/>
            <person name="Nori F."/>
            <person name="Ohara O."/>
            <person name="Okazaki Y."/>
            <person name="Orlando V."/>
            <person name="Pang K.C."/>
            <person name="Pavan W.J."/>
            <person name="Pavesi G."/>
            <person name="Pesole G."/>
            <person name="Petrovsky N."/>
            <person name="Piazza S."/>
            <person name="Reed J."/>
            <person name="Reid J.F."/>
            <person name="Ring B.Z."/>
            <person name="Ringwald M."/>
            <person name="Rost B."/>
            <person name="Ruan Y."/>
            <person name="Salzberg S.L."/>
            <person name="Sandelin A."/>
            <person name="Schneider C."/>
            <person name="Schoenbach C."/>
            <person name="Sekiguchi K."/>
            <person name="Semple C.A."/>
            <person name="Seno S."/>
            <person name="Sessa L."/>
            <person name="Sheng Y."/>
            <person name="Shibata Y."/>
            <person name="Shimada H."/>
            <person name="Shimada K."/>
            <person name="Silva D."/>
            <person name="Sinclair B."/>
            <person name="Sperling S."/>
            <person name="Stupka E."/>
            <person name="Sugiura K."/>
            <person name="Sultana R."/>
            <person name="Takenaka Y."/>
            <person name="Taki K."/>
            <person name="Tammoja K."/>
            <person name="Tan S.L."/>
            <person name="Tang S."/>
            <person name="Taylor M.S."/>
            <person name="Tegner J."/>
            <person name="Teichmann S.A."/>
            <person name="Ueda H.R."/>
            <person name="van Nimwegen E."/>
            <person name="Verardo R."/>
            <person name="Wei C.L."/>
            <person name="Yagi K."/>
            <person name="Yamanishi H."/>
            <person name="Zabarovsky E."/>
            <person name="Zhu S."/>
            <person name="Zimmer A."/>
            <person name="Hide W."/>
            <person name="Bult C."/>
            <person name="Grimmond S.M."/>
            <person name="Teasdale R.D."/>
            <person name="Liu E.T."/>
            <person name="Brusic V."/>
            <person name="Quackenbush J."/>
            <person name="Wahlestedt C."/>
            <person name="Mattick J.S."/>
            <person name="Hume D.A."/>
            <person name="Kai C."/>
            <person name="Sasaki D."/>
            <person name="Tomaru Y."/>
            <person name="Fukuda S."/>
            <person name="Kanamori-Katayama M."/>
            <person name="Suzuki M."/>
            <person name="Aoki J."/>
            <person name="Arakawa T."/>
            <person name="Iida J."/>
            <person name="Imamura K."/>
            <person name="Itoh M."/>
            <person name="Kato T."/>
            <person name="Kawaji H."/>
            <person name="Kawagashira N."/>
            <person name="Kawashima T."/>
            <person name="Kojima M."/>
            <person name="Kondo S."/>
            <person name="Konno H."/>
            <person name="Nakano K."/>
            <person name="Ninomiya N."/>
            <person name="Nishio T."/>
            <person name="Okada M."/>
            <person name="Plessy C."/>
            <person name="Shibata K."/>
            <person name="Shiraki T."/>
            <person name="Suzuki S."/>
            <person name="Tagami M."/>
            <person name="Waki K."/>
            <person name="Watahiki A."/>
            <person name="Okamura-Oho Y."/>
            <person name="Suzuki H."/>
            <person name="Kawai J."/>
            <person name="Hayashizaki Y."/>
        </authorList>
    </citation>
    <scope>NUCLEOTIDE SEQUENCE [LARGE SCALE MRNA]</scope>
    <source>
        <strain>C57BL/6J</strain>
        <tissue>Testis</tissue>
    </source>
</reference>
<reference key="3">
    <citation type="journal article" date="2009" name="PLoS Biol.">
        <title>Lineage-specific biology revealed by a finished genome assembly of the mouse.</title>
        <authorList>
            <person name="Church D.M."/>
            <person name="Goodstadt L."/>
            <person name="Hillier L.W."/>
            <person name="Zody M.C."/>
            <person name="Goldstein S."/>
            <person name="She X."/>
            <person name="Bult C.J."/>
            <person name="Agarwala R."/>
            <person name="Cherry J.L."/>
            <person name="DiCuccio M."/>
            <person name="Hlavina W."/>
            <person name="Kapustin Y."/>
            <person name="Meric P."/>
            <person name="Maglott D."/>
            <person name="Birtle Z."/>
            <person name="Marques A.C."/>
            <person name="Graves T."/>
            <person name="Zhou S."/>
            <person name="Teague B."/>
            <person name="Potamousis K."/>
            <person name="Churas C."/>
            <person name="Place M."/>
            <person name="Herschleb J."/>
            <person name="Runnheim R."/>
            <person name="Forrest D."/>
            <person name="Amos-Landgraf J."/>
            <person name="Schwartz D.C."/>
            <person name="Cheng Z."/>
            <person name="Lindblad-Toh K."/>
            <person name="Eichler E.E."/>
            <person name="Ponting C.P."/>
        </authorList>
    </citation>
    <scope>NUCLEOTIDE SEQUENCE [LARGE SCALE GENOMIC DNA]</scope>
    <source>
        <strain>C57BL/6J</strain>
    </source>
</reference>
<reference key="4">
    <citation type="submission" date="2005-07" db="EMBL/GenBank/DDBJ databases">
        <authorList>
            <person name="Mural R.J."/>
            <person name="Adams M.D."/>
            <person name="Myers E.W."/>
            <person name="Smith H.O."/>
            <person name="Venter J.C."/>
        </authorList>
    </citation>
    <scope>NUCLEOTIDE SEQUENCE [LARGE SCALE GENOMIC DNA]</scope>
</reference>
<reference key="5">
    <citation type="journal article" date="2004" name="Genome Res.">
        <title>The status, quality, and expansion of the NIH full-length cDNA project: the Mammalian Gene Collection (MGC).</title>
        <authorList>
            <consortium name="The MGC Project Team"/>
        </authorList>
    </citation>
    <scope>NUCLEOTIDE SEQUENCE [LARGE SCALE MRNA]</scope>
    <source>
        <tissue>Testis</tissue>
    </source>
</reference>
<reference key="6">
    <citation type="journal article" date="2010" name="Nucleic Acids Res.">
        <title>H2A.Bbd: an X-chromosome-encoded histone involved in mammalian spermiogenesis.</title>
        <authorList>
            <person name="Ishibashi T."/>
            <person name="Li A."/>
            <person name="Eirin-Lopez J.M."/>
            <person name="Zhao M."/>
            <person name="Missiaen K."/>
            <person name="Abbott D.W."/>
            <person name="Meistrich M."/>
            <person name="Hendzel M.J."/>
            <person name="Ausio J."/>
        </authorList>
    </citation>
    <scope>TISSUE SPECIFICITY</scope>
</reference>
<reference key="7">
    <citation type="journal article" date="2007" name="J. Cell Biol.">
        <title>Pericentric heterochromatin reprogramming by new histone variants during mouse spermiogenesis.</title>
        <authorList>
            <person name="Govin J."/>
            <person name="Escoffier E."/>
            <person name="Rousseaux S."/>
            <person name="Kuhn L."/>
            <person name="Ferro M."/>
            <person name="Thevenon J."/>
            <person name="Catena R."/>
            <person name="Davidson I."/>
            <person name="Garin J."/>
            <person name="Khochbin S."/>
            <person name="Caron C."/>
        </authorList>
    </citation>
    <scope>SUBCELLULAR LOCATION</scope>
    <scope>TISSUE SPECIFICITY</scope>
    <scope>DEVELOPMENTAL STAGE</scope>
</reference>
<reference key="8">
    <citation type="journal article" date="2008" name="J. Reprod. Dev.">
        <title>Testis-specific histone variants H2AL1/2 rapidly disappear from paternal heterochromatin after fertilization.</title>
        <authorList>
            <person name="Wu F."/>
            <person name="Caron C."/>
            <person name="De Robertis C."/>
            <person name="Khochbin S."/>
            <person name="Rousseaux S."/>
        </authorList>
    </citation>
    <scope>DEVELOPMENTAL STAGE</scope>
</reference>
<reference key="9">
    <citation type="journal article" date="2009" name="Nucleic Acids Res.">
        <title>The incorporation of the novel histone variant H2AL2 confers unusual structural and functional properties of the nucleosome.</title>
        <authorList>
            <person name="Syed S.H."/>
            <person name="Boulard M."/>
            <person name="Shukla M.S."/>
            <person name="Gautier T."/>
            <person name="Travers A."/>
            <person name="Bednar J."/>
            <person name="Faivre-Moskalenko C."/>
            <person name="Dimitrov S."/>
            <person name="Angelov D."/>
        </authorList>
    </citation>
    <scope>FUNCTION</scope>
    <scope>SUBUNIT</scope>
</reference>
<reference key="10">
    <citation type="journal article" date="2017" name="Mol. Cell">
        <title>Histone variant H2A.L.2 guides transition protein-dependent protamine assembly in male germ cells.</title>
        <authorList>
            <person name="Barral S."/>
            <person name="Morozumi Y."/>
            <person name="Tanaka H."/>
            <person name="Montellier E."/>
            <person name="Govin J."/>
            <person name="de Dieuleveult M."/>
            <person name="Charbonnier G."/>
            <person name="Coute Y."/>
            <person name="Puthier D."/>
            <person name="Buchou T."/>
            <person name="Boussouar F."/>
            <person name="Urahama T."/>
            <person name="Fenaille F."/>
            <person name="Curtet S."/>
            <person name="Hery P."/>
            <person name="Fernandez-Nunez N."/>
            <person name="Shiota H."/>
            <person name="Gerard M."/>
            <person name="Rousseaux S."/>
            <person name="Kurumizaka H."/>
            <person name="Khochbin S."/>
        </authorList>
    </citation>
    <scope>FUNCTION</scope>
    <scope>DEVELOPMENTAL STAGE</scope>
    <scope>INTERACTION WITH H2BC1</scope>
    <scope>DISRUPTION PHENOTYPE</scope>
</reference>
<feature type="chain" id="PRO_0000419684" description="Histone H2A-Bbd type 1">
    <location>
        <begin position="1"/>
        <end position="111"/>
    </location>
</feature>
<feature type="sequence conflict" description="In Ref. 2; BAB24661." evidence="11" ref="2">
    <original>E</original>
    <variation>G</variation>
    <location>
        <position position="89"/>
    </location>
</feature>
<name>H2AB1_MOUSE</name>
<sequence>MARKRQRRRRRKVTRSQRAELQFPVSRVDRFLREGNYSRRLSSSAPVFLAGVLEYLTSNILELAGEVAHTTGRKRIAPEHVCRVVQNNEQLHQLFKQGGTSVFEPPEPDDN</sequence>
<keyword id="KW-0158">Chromosome</keyword>
<keyword id="KW-0221">Differentiation</keyword>
<keyword id="KW-0238">DNA-binding</keyword>
<keyword id="KW-0544">Nucleosome core</keyword>
<keyword id="KW-0539">Nucleus</keyword>
<keyword id="KW-1185">Reference proteome</keyword>
<keyword id="KW-0744">Spermatogenesis</keyword>
<protein>
    <recommendedName>
        <fullName evidence="11">Histone H2A-Bbd type 1</fullName>
    </recommendedName>
    <alternativeName>
        <fullName evidence="1">H2A Barr body-deficient</fullName>
        <shortName evidence="1">H2A.Bbd</shortName>
    </alternativeName>
    <alternativeName>
        <fullName evidence="8">Histone H2A-like 2</fullName>
        <shortName evidence="10">H2A.L.2</shortName>
        <shortName evidence="8">H2AL2</shortName>
        <shortName evidence="8">Histone H2Alike 2</shortName>
    </alternativeName>
    <alternativeName>
        <fullName evidence="9">Testis-specific expressed gene 1 protein</fullName>
        <shortName evidence="9">TSEG-1</shortName>
    </alternativeName>
</protein>
<gene>
    <name type="primary">H2ab1</name>
    <name evidence="12" type="synonym">H2afb1</name>
    <name evidence="12" type="synonym">H2al2a</name>
</gene>